<sequence>MAEKITQYLGTGRRKTSVARVRLIPGGQGVEINGKAMDEYFGGRAILSRIVEQPLALTETLNKFAVKVNVVGGGNSGQAGAIRHGVARALLLADESLKEALREAGFLTRDSRMVERKKYGKKKARRSPQFSKR</sequence>
<gene>
    <name evidence="1" type="primary">rpsI</name>
    <name type="ordered locus">FN0330</name>
</gene>
<name>RS9_FUSNN</name>
<feature type="chain" id="PRO_0000111358" description="Small ribosomal subunit protein uS9">
    <location>
        <begin position="1"/>
        <end position="133"/>
    </location>
</feature>
<feature type="region of interest" description="Disordered" evidence="2">
    <location>
        <begin position="114"/>
        <end position="133"/>
    </location>
</feature>
<feature type="compositionally biased region" description="Basic residues" evidence="2">
    <location>
        <begin position="118"/>
        <end position="133"/>
    </location>
</feature>
<keyword id="KW-1185">Reference proteome</keyword>
<keyword id="KW-0687">Ribonucleoprotein</keyword>
<keyword id="KW-0689">Ribosomal protein</keyword>
<protein>
    <recommendedName>
        <fullName evidence="1">Small ribosomal subunit protein uS9</fullName>
    </recommendedName>
    <alternativeName>
        <fullName evidence="3">30S ribosomal protein S9</fullName>
    </alternativeName>
</protein>
<proteinExistence type="inferred from homology"/>
<reference key="1">
    <citation type="journal article" date="2002" name="J. Bacteriol.">
        <title>Genome sequence and analysis of the oral bacterium Fusobacterium nucleatum strain ATCC 25586.</title>
        <authorList>
            <person name="Kapatral V."/>
            <person name="Anderson I."/>
            <person name="Ivanova N."/>
            <person name="Reznik G."/>
            <person name="Los T."/>
            <person name="Lykidis A."/>
            <person name="Bhattacharyya A."/>
            <person name="Bartman A."/>
            <person name="Gardner W."/>
            <person name="Grechkin G."/>
            <person name="Zhu L."/>
            <person name="Vasieva O."/>
            <person name="Chu L."/>
            <person name="Kogan Y."/>
            <person name="Chaga O."/>
            <person name="Goltsman E."/>
            <person name="Bernal A."/>
            <person name="Larsen N."/>
            <person name="D'Souza M."/>
            <person name="Walunas T."/>
            <person name="Pusch G."/>
            <person name="Haselkorn R."/>
            <person name="Fonstein M."/>
            <person name="Kyrpides N.C."/>
            <person name="Overbeek R."/>
        </authorList>
    </citation>
    <scope>NUCLEOTIDE SEQUENCE [LARGE SCALE GENOMIC DNA]</scope>
    <source>
        <strain>ATCC 25586 / DSM 15643 / BCRC 10681 / CIP 101130 / JCM 8532 / KCTC 2640 / LMG 13131 / VPI 4355</strain>
    </source>
</reference>
<organism>
    <name type="scientific">Fusobacterium nucleatum subsp. nucleatum (strain ATCC 25586 / DSM 15643 / BCRC 10681 / CIP 101130 / JCM 8532 / KCTC 2640 / LMG 13131 / VPI 4355)</name>
    <dbReference type="NCBI Taxonomy" id="190304"/>
    <lineage>
        <taxon>Bacteria</taxon>
        <taxon>Fusobacteriati</taxon>
        <taxon>Fusobacteriota</taxon>
        <taxon>Fusobacteriia</taxon>
        <taxon>Fusobacteriales</taxon>
        <taxon>Fusobacteriaceae</taxon>
        <taxon>Fusobacterium</taxon>
    </lineage>
</organism>
<comment type="similarity">
    <text evidence="1">Belongs to the universal ribosomal protein uS9 family.</text>
</comment>
<accession>Q8RGG8</accession>
<dbReference type="EMBL" id="AE009951">
    <property type="protein sequence ID" value="AAL94534.1"/>
    <property type="molecule type" value="Genomic_DNA"/>
</dbReference>
<dbReference type="RefSeq" id="NP_603235.1">
    <property type="nucleotide sequence ID" value="NC_003454.1"/>
</dbReference>
<dbReference type="RefSeq" id="WP_005901602.1">
    <property type="nucleotide sequence ID" value="NZ_OZ209243.1"/>
</dbReference>
<dbReference type="SMR" id="Q8RGG8"/>
<dbReference type="FunCoup" id="Q8RGG8">
    <property type="interactions" value="416"/>
</dbReference>
<dbReference type="STRING" id="190304.FN0330"/>
<dbReference type="PaxDb" id="190304-FN0330"/>
<dbReference type="EnsemblBacteria" id="AAL94534">
    <property type="protein sequence ID" value="AAL94534"/>
    <property type="gene ID" value="FN0330"/>
</dbReference>
<dbReference type="GeneID" id="79783339"/>
<dbReference type="KEGG" id="fnu:FN0330"/>
<dbReference type="PATRIC" id="fig|190304.8.peg.908"/>
<dbReference type="eggNOG" id="COG0103">
    <property type="taxonomic scope" value="Bacteria"/>
</dbReference>
<dbReference type="HOGENOM" id="CLU_046483_2_1_0"/>
<dbReference type="InParanoid" id="Q8RGG8"/>
<dbReference type="BioCyc" id="FNUC190304:G1FZS-927-MONOMER"/>
<dbReference type="Proteomes" id="UP000002521">
    <property type="component" value="Chromosome"/>
</dbReference>
<dbReference type="GO" id="GO:0022627">
    <property type="term" value="C:cytosolic small ribosomal subunit"/>
    <property type="evidence" value="ECO:0000318"/>
    <property type="project" value="GO_Central"/>
</dbReference>
<dbReference type="GO" id="GO:0003723">
    <property type="term" value="F:RNA binding"/>
    <property type="evidence" value="ECO:0000318"/>
    <property type="project" value="GO_Central"/>
</dbReference>
<dbReference type="GO" id="GO:0003735">
    <property type="term" value="F:structural constituent of ribosome"/>
    <property type="evidence" value="ECO:0000318"/>
    <property type="project" value="GO_Central"/>
</dbReference>
<dbReference type="GO" id="GO:0006412">
    <property type="term" value="P:translation"/>
    <property type="evidence" value="ECO:0007669"/>
    <property type="project" value="UniProtKB-UniRule"/>
</dbReference>
<dbReference type="FunFam" id="3.30.230.10:FF:000001">
    <property type="entry name" value="30S ribosomal protein S9"/>
    <property type="match status" value="1"/>
</dbReference>
<dbReference type="Gene3D" id="3.30.230.10">
    <property type="match status" value="1"/>
</dbReference>
<dbReference type="HAMAP" id="MF_00532_B">
    <property type="entry name" value="Ribosomal_uS9_B"/>
    <property type="match status" value="1"/>
</dbReference>
<dbReference type="InterPro" id="IPR020568">
    <property type="entry name" value="Ribosomal_Su5_D2-typ_SF"/>
</dbReference>
<dbReference type="InterPro" id="IPR000754">
    <property type="entry name" value="Ribosomal_uS9"/>
</dbReference>
<dbReference type="InterPro" id="IPR023035">
    <property type="entry name" value="Ribosomal_uS9_bac/plastid"/>
</dbReference>
<dbReference type="InterPro" id="IPR020574">
    <property type="entry name" value="Ribosomal_uS9_CS"/>
</dbReference>
<dbReference type="InterPro" id="IPR014721">
    <property type="entry name" value="Ribsml_uS5_D2-typ_fold_subgr"/>
</dbReference>
<dbReference type="NCBIfam" id="NF001099">
    <property type="entry name" value="PRK00132.1"/>
    <property type="match status" value="1"/>
</dbReference>
<dbReference type="PANTHER" id="PTHR21569">
    <property type="entry name" value="RIBOSOMAL PROTEIN S9"/>
    <property type="match status" value="1"/>
</dbReference>
<dbReference type="PANTHER" id="PTHR21569:SF1">
    <property type="entry name" value="SMALL RIBOSOMAL SUBUNIT PROTEIN US9M"/>
    <property type="match status" value="1"/>
</dbReference>
<dbReference type="Pfam" id="PF00380">
    <property type="entry name" value="Ribosomal_S9"/>
    <property type="match status" value="1"/>
</dbReference>
<dbReference type="SUPFAM" id="SSF54211">
    <property type="entry name" value="Ribosomal protein S5 domain 2-like"/>
    <property type="match status" value="1"/>
</dbReference>
<dbReference type="PROSITE" id="PS00360">
    <property type="entry name" value="RIBOSOMAL_S9"/>
    <property type="match status" value="1"/>
</dbReference>
<evidence type="ECO:0000255" key="1">
    <source>
        <dbReference type="HAMAP-Rule" id="MF_00532"/>
    </source>
</evidence>
<evidence type="ECO:0000256" key="2">
    <source>
        <dbReference type="SAM" id="MobiDB-lite"/>
    </source>
</evidence>
<evidence type="ECO:0000305" key="3"/>